<gene>
    <name evidence="5" type="primary">HOB1</name>
    <name type="ORF">CNAG_01431</name>
</gene>
<dbReference type="EMBL" id="CP003824">
    <property type="protein sequence ID" value="AFR94711.1"/>
    <property type="molecule type" value="Genomic_DNA"/>
</dbReference>
<dbReference type="RefSeq" id="XP_012049538.1">
    <property type="nucleotide sequence ID" value="XM_012194148.1"/>
</dbReference>
<dbReference type="SMR" id="J9VMN6"/>
<dbReference type="GeneID" id="23885147"/>
<dbReference type="KEGG" id="cng:CNAG_01431"/>
<dbReference type="VEuPathDB" id="FungiDB:CNAG_01431"/>
<dbReference type="HOGENOM" id="CLU_499852_0_0_1"/>
<dbReference type="OrthoDB" id="4027at5206"/>
<dbReference type="Proteomes" id="UP000010091">
    <property type="component" value="Chromosome 5"/>
</dbReference>
<dbReference type="GO" id="GO:0005634">
    <property type="term" value="C:nucleus"/>
    <property type="evidence" value="ECO:0007669"/>
    <property type="project" value="UniProtKB-SubCell"/>
</dbReference>
<dbReference type="GO" id="GO:0003677">
    <property type="term" value="F:DNA binding"/>
    <property type="evidence" value="ECO:0007669"/>
    <property type="project" value="UniProtKB-KW"/>
</dbReference>
<dbReference type="GO" id="GO:0000981">
    <property type="term" value="F:DNA-binding transcription factor activity, RNA polymerase II-specific"/>
    <property type="evidence" value="ECO:0007669"/>
    <property type="project" value="TreeGrafter"/>
</dbReference>
<dbReference type="GO" id="GO:0042438">
    <property type="term" value="P:melanin biosynthetic process"/>
    <property type="evidence" value="ECO:0007669"/>
    <property type="project" value="UniProtKB-KW"/>
</dbReference>
<dbReference type="GO" id="GO:0008202">
    <property type="term" value="P:steroid metabolic process"/>
    <property type="evidence" value="ECO:0007669"/>
    <property type="project" value="UniProtKB-KW"/>
</dbReference>
<dbReference type="CDD" id="cd00086">
    <property type="entry name" value="homeodomain"/>
    <property type="match status" value="1"/>
</dbReference>
<dbReference type="Gene3D" id="1.10.10.60">
    <property type="entry name" value="Homeodomain-like"/>
    <property type="match status" value="1"/>
</dbReference>
<dbReference type="InterPro" id="IPR001356">
    <property type="entry name" value="HD"/>
</dbReference>
<dbReference type="InterPro" id="IPR009057">
    <property type="entry name" value="Homeodomain-like_sf"/>
</dbReference>
<dbReference type="PANTHER" id="PTHR15467:SF9">
    <property type="entry name" value="HOMEOBOX DOMAIN-CONTAINING PROTEIN"/>
    <property type="match status" value="1"/>
</dbReference>
<dbReference type="PANTHER" id="PTHR15467">
    <property type="entry name" value="ZINC-FINGERS AND HOMEOBOXES RELATED"/>
    <property type="match status" value="1"/>
</dbReference>
<dbReference type="Pfam" id="PF00046">
    <property type="entry name" value="Homeodomain"/>
    <property type="match status" value="1"/>
</dbReference>
<dbReference type="SMART" id="SM00389">
    <property type="entry name" value="HOX"/>
    <property type="match status" value="1"/>
</dbReference>
<dbReference type="SUPFAM" id="SSF46689">
    <property type="entry name" value="Homeodomain-like"/>
    <property type="match status" value="1"/>
</dbReference>
<dbReference type="PROSITE" id="PS50071">
    <property type="entry name" value="HOMEOBOX_2"/>
    <property type="match status" value="1"/>
</dbReference>
<evidence type="ECO:0000255" key="1">
    <source>
        <dbReference type="PROSITE-ProRule" id="PRU00108"/>
    </source>
</evidence>
<evidence type="ECO:0000256" key="2">
    <source>
        <dbReference type="SAM" id="MobiDB-lite"/>
    </source>
</evidence>
<evidence type="ECO:0000269" key="3">
    <source>
    </source>
</evidence>
<evidence type="ECO:0000269" key="4">
    <source>
    </source>
</evidence>
<evidence type="ECO:0000303" key="5">
    <source>
    </source>
</evidence>
<comment type="function">
    <text evidence="3 4">General stress-responsive transcription factor that governs multiple stress responses and adaptations (PubMed:25849373). Plays a key role in virulence (PubMed:25849373). Mediates the expression of LAC1, which is the major laccase involved in melanin synthesis (PubMed:25849373, PubMed:31575776). Positively regulates BZP4 induction under conditions of nutrient starvation and basal expression levels of MBS1 and USV101, 3 major transcription factors that independently contribute to melanin production (PubMed:31575776). Also acts as a key regulator of ergosterol gene expression (PubMed:25849373).</text>
</comment>
<comment type="subcellular location">
    <subcellularLocation>
        <location evidence="1">Nucleus</location>
    </subcellularLocation>
</comment>
<comment type="induction">
    <text evidence="4">Expression is induced by nutrient starvation.</text>
</comment>
<comment type="disruption phenotype">
    <text evidence="3 4">Shows normal growth at 30 degrees Celsius but exhibits growth defects at 25 degrees Celsius or at high temperature (PubMed:25849373). Reduces resistance to osmotic/salt, oxidizing/reducing, genotoxic, endoplasmic reticulum (ER) and cell wall/membrane stresses (PubMed:25849373). Reduces LAC1 induction mediated by nutrient starvation and leads to greatly reduced melanin production (PubMed:25849373, PubMed:31575776). Markedly increases the basal expression levels of ERG2 and ERG11 under sterol-replete conditions and decreases the induction of ERG2, ERG3, ERG5, ERG11 and ERG25 under sterol depletion (PubMed:25849373). Significantly reduced the virulence (PubMed:25849373).</text>
</comment>
<feature type="chain" id="PRO_0000460780" description="Homeobox domain-containing transcription factor HOB1">
    <location>
        <begin position="1"/>
        <end position="591"/>
    </location>
</feature>
<feature type="DNA-binding region" description="Homeobox" evidence="1">
    <location>
        <begin position="176"/>
        <end position="223"/>
    </location>
</feature>
<feature type="region of interest" description="Disordered" evidence="2">
    <location>
        <begin position="1"/>
        <end position="37"/>
    </location>
</feature>
<feature type="region of interest" description="Disordered" evidence="2">
    <location>
        <begin position="148"/>
        <end position="168"/>
    </location>
</feature>
<feature type="region of interest" description="Disordered" evidence="2">
    <location>
        <begin position="420"/>
        <end position="463"/>
    </location>
</feature>
<feature type="region of interest" description="Disordered" evidence="2">
    <location>
        <begin position="543"/>
        <end position="563"/>
    </location>
</feature>
<feature type="compositionally biased region" description="Basic and acidic residues" evidence="2">
    <location>
        <begin position="1"/>
        <end position="15"/>
    </location>
</feature>
<feature type="compositionally biased region" description="Acidic residues" evidence="2">
    <location>
        <begin position="427"/>
        <end position="441"/>
    </location>
</feature>
<feature type="compositionally biased region" description="Basic and acidic residues" evidence="2">
    <location>
        <begin position="543"/>
        <end position="560"/>
    </location>
</feature>
<accession>J9VMN6</accession>
<keyword id="KW-0238">DNA-binding</keyword>
<keyword id="KW-0371">Homeobox</keyword>
<keyword id="KW-0443">Lipid metabolism</keyword>
<keyword id="KW-0470">Melanin biosynthesis</keyword>
<keyword id="KW-0539">Nucleus</keyword>
<keyword id="KW-0753">Steroid metabolism</keyword>
<keyword id="KW-1207">Sterol metabolism</keyword>
<keyword id="KW-0346">Stress response</keyword>
<keyword id="KW-0804">Transcription</keyword>
<keyword id="KW-0805">Transcription regulation</keyword>
<keyword id="KW-0843">Virulence</keyword>
<reference key="1">
    <citation type="journal article" date="2014" name="PLoS Genet.">
        <title>Analysis of the genome and transcriptome of Cryptococcus neoformans var. grubii reveals complex RNA expression and microevolution leading to virulence attenuation.</title>
        <authorList>
            <person name="Janbon G."/>
            <person name="Ormerod K.L."/>
            <person name="Paulet D."/>
            <person name="Byrnes E.J. III"/>
            <person name="Yadav V."/>
            <person name="Chatterjee G."/>
            <person name="Mullapudi N."/>
            <person name="Hon C.-C."/>
            <person name="Billmyre R.B."/>
            <person name="Brunel F."/>
            <person name="Bahn Y.-S."/>
            <person name="Chen W."/>
            <person name="Chen Y."/>
            <person name="Chow E.W.L."/>
            <person name="Coppee J.-Y."/>
            <person name="Floyd-Averette A."/>
            <person name="Gaillardin C."/>
            <person name="Gerik K.J."/>
            <person name="Goldberg J."/>
            <person name="Gonzalez-Hilarion S."/>
            <person name="Gujja S."/>
            <person name="Hamlin J.L."/>
            <person name="Hsueh Y.-P."/>
            <person name="Ianiri G."/>
            <person name="Jones S."/>
            <person name="Kodira C.D."/>
            <person name="Kozubowski L."/>
            <person name="Lam W."/>
            <person name="Marra M."/>
            <person name="Mesner L.D."/>
            <person name="Mieczkowski P.A."/>
            <person name="Moyrand F."/>
            <person name="Nielsen K."/>
            <person name="Proux C."/>
            <person name="Rossignol T."/>
            <person name="Schein J.E."/>
            <person name="Sun S."/>
            <person name="Wollschlaeger C."/>
            <person name="Wood I.A."/>
            <person name="Zeng Q."/>
            <person name="Neuveglise C."/>
            <person name="Newlon C.S."/>
            <person name="Perfect J.R."/>
            <person name="Lodge J.K."/>
            <person name="Idnurm A."/>
            <person name="Stajich J.E."/>
            <person name="Kronstad J.W."/>
            <person name="Sanyal K."/>
            <person name="Heitman J."/>
            <person name="Fraser J.A."/>
            <person name="Cuomo C.A."/>
            <person name="Dietrich F.S."/>
        </authorList>
    </citation>
    <scope>NUCLEOTIDE SEQUENCE [LARGE SCALE GENOMIC DNA]</scope>
    <source>
        <strain>H99 / ATCC 208821 / CBS 10515 / FGSC 9487</strain>
    </source>
</reference>
<reference key="2">
    <citation type="journal article" date="2015" name="Nat. Commun.">
        <title>Systematic functional profiling of transcription factor networks in Cryptococcus neoformans.</title>
        <authorList>
            <person name="Jung K.W."/>
            <person name="Yang D.H."/>
            <person name="Maeng S."/>
            <person name="Lee K.T."/>
            <person name="So Y.S."/>
            <person name="Hong J."/>
            <person name="Choi J."/>
            <person name="Byun H.J."/>
            <person name="Kim H."/>
            <person name="Bang S."/>
            <person name="Song M.H."/>
            <person name="Lee J.W."/>
            <person name="Kim M.S."/>
            <person name="Kim S.Y."/>
            <person name="Ji J.H."/>
            <person name="Park G."/>
            <person name="Kwon H."/>
            <person name="Cha S."/>
            <person name="Meyers G.L."/>
            <person name="Wang L.L."/>
            <person name="Jang J."/>
            <person name="Janbon G."/>
            <person name="Adedoyin G."/>
            <person name="Kim T."/>
            <person name="Averette A.K."/>
            <person name="Heitman J."/>
            <person name="Cheong E."/>
            <person name="Lee Y.H."/>
            <person name="Lee Y.W."/>
            <person name="Bahn Y.S."/>
        </authorList>
    </citation>
    <scope>IDENTIFICATION</scope>
    <scope>FUNCTION</scope>
    <scope>DISRUPTION PHENOTYPE</scope>
</reference>
<reference key="3">
    <citation type="journal article" date="2019" name="MBio">
        <title>Unraveling melanin biosynthesis and signaling networks in Cryptococcus neoformans.</title>
        <authorList>
            <person name="Lee D."/>
            <person name="Jang E.H."/>
            <person name="Lee M."/>
            <person name="Kim S.W."/>
            <person name="Lee Y."/>
            <person name="Lee K.T."/>
            <person name="Bahn Y.S."/>
        </authorList>
    </citation>
    <scope>INDUCTION</scope>
    <scope>FUNCTION</scope>
    <scope>DISRUPTION PHENOTYPE</scope>
</reference>
<organism>
    <name type="scientific">Cryptococcus neoformans var. grubii serotype A (strain H99 / ATCC 208821 / CBS 10515 / FGSC 9487)</name>
    <name type="common">Filobasidiella neoformans var. grubii</name>
    <dbReference type="NCBI Taxonomy" id="235443"/>
    <lineage>
        <taxon>Eukaryota</taxon>
        <taxon>Fungi</taxon>
        <taxon>Dikarya</taxon>
        <taxon>Basidiomycota</taxon>
        <taxon>Agaricomycotina</taxon>
        <taxon>Tremellomycetes</taxon>
        <taxon>Tremellales</taxon>
        <taxon>Cryptococcaceae</taxon>
        <taxon>Cryptococcus</taxon>
        <taxon>Cryptococcus neoformans species complex</taxon>
    </lineage>
</organism>
<protein>
    <recommendedName>
        <fullName evidence="5">Homeobox domain-containing transcription factor HOB1</fullName>
    </recommendedName>
</protein>
<name>HOB1_CRYNH</name>
<proteinExistence type="evidence at transcript level"/>
<sequence>MEGKNEDMHTPRGPEDASNIADEYPSPERQQQGDMLGHDIHHHLDMHHERDARDTHSPGQTDMQTELAKQVAAQAIEAAVAHVQANADRQEAGGTEACGQVSNGNQRDIHMREEPHLSNSQHHPRQPVFPRSRQSFIALSPTSVATSIAGPSTLRRSPLPDTFSRSPAPLSANDQIAILRESYARNPNPDRKELERLAARTGRPWNKIREYFRQRRNKLRGLEQLEKMEEPGRASGWLQITYRSAPVTSQVPQLALYNSYRHRFDPYSSSTPLLGGQDLIQLACATFPGCEMARDDGEYVLKGLKEKDKEREDALGDNEAMGRKGREIDPEEWERGMEGLVEPLRAGSWLLSSFQSQPGTSGSDITQTDLYTSYAARFSSLLTGVSGTSNGNAHLNGHHGLSDEEAELRNHAESLKAFEDAGLGDTQGEEDQPPTVEESDQNETSPASFPADPNPLPQAPRESRLLTPVELINLTRMTFPACEPCVDSSGRFVIKGLERREGLEPGRKSREGEMFPFALMSEKQPGEEFVKVMKRKLASLHPDAIERRNAGESKRKRDDALTEEDKELIEGLKRFRGSKLGEQVRDVCVSQ</sequence>